<comment type="function">
    <text evidence="1">Catalyzes the methylthiolation of N6-(dimethylallyl)adenosine (i(6)A), leading to the formation of 2-methylthio-N6-(dimethylallyl)adenosine (ms(2)i(6)A) at position 37 in tRNAs that read codons beginning with uridine.</text>
</comment>
<comment type="catalytic activity">
    <reaction evidence="1">
        <text>N(6)-dimethylallyladenosine(37) in tRNA + (sulfur carrier)-SH + AH2 + 2 S-adenosyl-L-methionine = 2-methylsulfanyl-N(6)-dimethylallyladenosine(37) in tRNA + (sulfur carrier)-H + 5'-deoxyadenosine + L-methionine + A + S-adenosyl-L-homocysteine + 2 H(+)</text>
        <dbReference type="Rhea" id="RHEA:37067"/>
        <dbReference type="Rhea" id="RHEA-COMP:10375"/>
        <dbReference type="Rhea" id="RHEA-COMP:10376"/>
        <dbReference type="Rhea" id="RHEA-COMP:14737"/>
        <dbReference type="Rhea" id="RHEA-COMP:14739"/>
        <dbReference type="ChEBI" id="CHEBI:13193"/>
        <dbReference type="ChEBI" id="CHEBI:15378"/>
        <dbReference type="ChEBI" id="CHEBI:17319"/>
        <dbReference type="ChEBI" id="CHEBI:17499"/>
        <dbReference type="ChEBI" id="CHEBI:29917"/>
        <dbReference type="ChEBI" id="CHEBI:57844"/>
        <dbReference type="ChEBI" id="CHEBI:57856"/>
        <dbReference type="ChEBI" id="CHEBI:59789"/>
        <dbReference type="ChEBI" id="CHEBI:64428"/>
        <dbReference type="ChEBI" id="CHEBI:74415"/>
        <dbReference type="ChEBI" id="CHEBI:74417"/>
        <dbReference type="EC" id="2.8.4.3"/>
    </reaction>
</comment>
<comment type="cofactor">
    <cofactor evidence="1">
        <name>[4Fe-4S] cluster</name>
        <dbReference type="ChEBI" id="CHEBI:49883"/>
    </cofactor>
    <text evidence="1">Binds 2 [4Fe-4S] clusters. One cluster is coordinated with 3 cysteines and an exchangeable S-adenosyl-L-methionine.</text>
</comment>
<comment type="subunit">
    <text evidence="1">Monomer.</text>
</comment>
<comment type="subcellular location">
    <subcellularLocation>
        <location evidence="1">Cytoplasm</location>
    </subcellularLocation>
</comment>
<comment type="similarity">
    <text evidence="1">Belongs to the methylthiotransferase family. MiaB subfamily.</text>
</comment>
<gene>
    <name evidence="1" type="primary">miaB</name>
    <name type="ordered locus">Rpal_0452</name>
</gene>
<sequence length="463" mass="50652">MSPPRKLHIKSYGCQMNVYDAQRMVDALAPEGFVETANVDDADLVILNTCHIREKASEKVYSELGRLRVARDEAANHGRRMQIAVAGCVAQAEGEEIIRRAPVVDVVVGPQSYHNLPQLLAKAEQHGRALETEFPIEDKFGVLPQPAPDAIRARGISAFVTVQEGCDKFCTFCVVPYTRGAEMSRPVVAIVEDVKRLAENGVREVTLIGQNVNAYHGDGPDGRAWSLGRLVRRLAEIPGIVRLRYSTSHPNDVDDDLLAAHRDLPALMPFVHLPVQSGSDRILAAMNRKHTADDYRRVIDRFRSASETIAFSSDFIVGFPGETERDFSATLALVAQIGYAGAYSFKYSPRPGTPAADMVEMVPAAVMDERLEQLQQLIDQQQSAFNKAAIGRTVEVLFERAGRKPGQIVGRTAYLQPAHVMAPDSIIGKVLPVRVDSLERYSLLGELASATSRPADAMAATGA</sequence>
<organism>
    <name type="scientific">Rhodopseudomonas palustris (strain TIE-1)</name>
    <dbReference type="NCBI Taxonomy" id="395960"/>
    <lineage>
        <taxon>Bacteria</taxon>
        <taxon>Pseudomonadati</taxon>
        <taxon>Pseudomonadota</taxon>
        <taxon>Alphaproteobacteria</taxon>
        <taxon>Hyphomicrobiales</taxon>
        <taxon>Nitrobacteraceae</taxon>
        <taxon>Rhodopseudomonas</taxon>
    </lineage>
</organism>
<keyword id="KW-0004">4Fe-4S</keyword>
<keyword id="KW-0963">Cytoplasm</keyword>
<keyword id="KW-0408">Iron</keyword>
<keyword id="KW-0411">Iron-sulfur</keyword>
<keyword id="KW-0479">Metal-binding</keyword>
<keyword id="KW-0949">S-adenosyl-L-methionine</keyword>
<keyword id="KW-0808">Transferase</keyword>
<keyword id="KW-0819">tRNA processing</keyword>
<feature type="chain" id="PRO_0000374498" description="tRNA-2-methylthio-N(6)-dimethylallyladenosine synthase">
    <location>
        <begin position="1"/>
        <end position="463"/>
    </location>
</feature>
<feature type="domain" description="MTTase N-terminal" evidence="1">
    <location>
        <begin position="5"/>
        <end position="125"/>
    </location>
</feature>
<feature type="domain" description="Radical SAM core" evidence="2">
    <location>
        <begin position="152"/>
        <end position="384"/>
    </location>
</feature>
<feature type="domain" description="TRAM" evidence="1">
    <location>
        <begin position="387"/>
        <end position="449"/>
    </location>
</feature>
<feature type="binding site" evidence="1">
    <location>
        <position position="14"/>
    </location>
    <ligand>
        <name>[4Fe-4S] cluster</name>
        <dbReference type="ChEBI" id="CHEBI:49883"/>
        <label>1</label>
    </ligand>
</feature>
<feature type="binding site" evidence="1">
    <location>
        <position position="50"/>
    </location>
    <ligand>
        <name>[4Fe-4S] cluster</name>
        <dbReference type="ChEBI" id="CHEBI:49883"/>
        <label>1</label>
    </ligand>
</feature>
<feature type="binding site" evidence="1">
    <location>
        <position position="88"/>
    </location>
    <ligand>
        <name>[4Fe-4S] cluster</name>
        <dbReference type="ChEBI" id="CHEBI:49883"/>
        <label>1</label>
    </ligand>
</feature>
<feature type="binding site" evidence="1">
    <location>
        <position position="166"/>
    </location>
    <ligand>
        <name>[4Fe-4S] cluster</name>
        <dbReference type="ChEBI" id="CHEBI:49883"/>
        <label>2</label>
        <note>4Fe-4S-S-AdoMet</note>
    </ligand>
</feature>
<feature type="binding site" evidence="1">
    <location>
        <position position="170"/>
    </location>
    <ligand>
        <name>[4Fe-4S] cluster</name>
        <dbReference type="ChEBI" id="CHEBI:49883"/>
        <label>2</label>
        <note>4Fe-4S-S-AdoMet</note>
    </ligand>
</feature>
<feature type="binding site" evidence="1">
    <location>
        <position position="173"/>
    </location>
    <ligand>
        <name>[4Fe-4S] cluster</name>
        <dbReference type="ChEBI" id="CHEBI:49883"/>
        <label>2</label>
        <note>4Fe-4S-S-AdoMet</note>
    </ligand>
</feature>
<reference key="1">
    <citation type="submission" date="2008-05" db="EMBL/GenBank/DDBJ databases">
        <title>Complete sequence of Rhodopseudomonas palustris TIE-1.</title>
        <authorList>
            <consortium name="US DOE Joint Genome Institute"/>
            <person name="Lucas S."/>
            <person name="Copeland A."/>
            <person name="Lapidus A."/>
            <person name="Glavina del Rio T."/>
            <person name="Dalin E."/>
            <person name="Tice H."/>
            <person name="Pitluck S."/>
            <person name="Chain P."/>
            <person name="Malfatti S."/>
            <person name="Shin M."/>
            <person name="Vergez L."/>
            <person name="Lang D."/>
            <person name="Schmutz J."/>
            <person name="Larimer F."/>
            <person name="Land M."/>
            <person name="Hauser L."/>
            <person name="Kyrpides N."/>
            <person name="Mikhailova N."/>
            <person name="Emerson D."/>
            <person name="Newman D.K."/>
            <person name="Roden E."/>
            <person name="Richardson P."/>
        </authorList>
    </citation>
    <scope>NUCLEOTIDE SEQUENCE [LARGE SCALE GENOMIC DNA]</scope>
    <source>
        <strain>TIE-1</strain>
    </source>
</reference>
<evidence type="ECO:0000255" key="1">
    <source>
        <dbReference type="HAMAP-Rule" id="MF_01864"/>
    </source>
</evidence>
<evidence type="ECO:0000255" key="2">
    <source>
        <dbReference type="PROSITE-ProRule" id="PRU01266"/>
    </source>
</evidence>
<accession>B3QAC6</accession>
<name>MIAB_RHOPT</name>
<dbReference type="EC" id="2.8.4.3" evidence="1"/>
<dbReference type="EMBL" id="CP001096">
    <property type="protein sequence ID" value="ACE99012.1"/>
    <property type="molecule type" value="Genomic_DNA"/>
</dbReference>
<dbReference type="RefSeq" id="WP_012494163.1">
    <property type="nucleotide sequence ID" value="NC_011004.1"/>
</dbReference>
<dbReference type="SMR" id="B3QAC6"/>
<dbReference type="KEGG" id="rpt:Rpal_0452"/>
<dbReference type="HOGENOM" id="CLU_018697_2_0_5"/>
<dbReference type="OrthoDB" id="9805215at2"/>
<dbReference type="Proteomes" id="UP000001725">
    <property type="component" value="Chromosome"/>
</dbReference>
<dbReference type="GO" id="GO:0005829">
    <property type="term" value="C:cytosol"/>
    <property type="evidence" value="ECO:0007669"/>
    <property type="project" value="TreeGrafter"/>
</dbReference>
<dbReference type="GO" id="GO:0051539">
    <property type="term" value="F:4 iron, 4 sulfur cluster binding"/>
    <property type="evidence" value="ECO:0007669"/>
    <property type="project" value="UniProtKB-UniRule"/>
</dbReference>
<dbReference type="GO" id="GO:0046872">
    <property type="term" value="F:metal ion binding"/>
    <property type="evidence" value="ECO:0007669"/>
    <property type="project" value="UniProtKB-KW"/>
</dbReference>
<dbReference type="GO" id="GO:0035597">
    <property type="term" value="F:N6-isopentenyladenosine methylthiotransferase activity"/>
    <property type="evidence" value="ECO:0007669"/>
    <property type="project" value="TreeGrafter"/>
</dbReference>
<dbReference type="CDD" id="cd01335">
    <property type="entry name" value="Radical_SAM"/>
    <property type="match status" value="1"/>
</dbReference>
<dbReference type="FunFam" id="3.40.50.12160:FF:000003">
    <property type="entry name" value="CDK5 regulatory subunit-associated protein 1"/>
    <property type="match status" value="1"/>
</dbReference>
<dbReference type="FunFam" id="3.80.30.20:FF:000001">
    <property type="entry name" value="tRNA-2-methylthio-N(6)-dimethylallyladenosine synthase 2"/>
    <property type="match status" value="1"/>
</dbReference>
<dbReference type="Gene3D" id="3.40.50.12160">
    <property type="entry name" value="Methylthiotransferase, N-terminal domain"/>
    <property type="match status" value="1"/>
</dbReference>
<dbReference type="Gene3D" id="3.80.30.20">
    <property type="entry name" value="tm_1862 like domain"/>
    <property type="match status" value="1"/>
</dbReference>
<dbReference type="HAMAP" id="MF_01864">
    <property type="entry name" value="tRNA_metthiotr_MiaB"/>
    <property type="match status" value="1"/>
</dbReference>
<dbReference type="InterPro" id="IPR006638">
    <property type="entry name" value="Elp3/MiaA/NifB-like_rSAM"/>
</dbReference>
<dbReference type="InterPro" id="IPR005839">
    <property type="entry name" value="Methylthiotransferase"/>
</dbReference>
<dbReference type="InterPro" id="IPR020612">
    <property type="entry name" value="Methylthiotransferase_CS"/>
</dbReference>
<dbReference type="InterPro" id="IPR013848">
    <property type="entry name" value="Methylthiotransferase_N"/>
</dbReference>
<dbReference type="InterPro" id="IPR038135">
    <property type="entry name" value="Methylthiotransferase_N_sf"/>
</dbReference>
<dbReference type="InterPro" id="IPR006463">
    <property type="entry name" value="MiaB_methiolase"/>
</dbReference>
<dbReference type="InterPro" id="IPR007197">
    <property type="entry name" value="rSAM"/>
</dbReference>
<dbReference type="InterPro" id="IPR023404">
    <property type="entry name" value="rSAM_horseshoe"/>
</dbReference>
<dbReference type="InterPro" id="IPR002792">
    <property type="entry name" value="TRAM_dom"/>
</dbReference>
<dbReference type="NCBIfam" id="TIGR01574">
    <property type="entry name" value="miaB-methiolase"/>
    <property type="match status" value="1"/>
</dbReference>
<dbReference type="NCBIfam" id="TIGR00089">
    <property type="entry name" value="MiaB/RimO family radical SAM methylthiotransferase"/>
    <property type="match status" value="1"/>
</dbReference>
<dbReference type="PANTHER" id="PTHR43020">
    <property type="entry name" value="CDK5 REGULATORY SUBUNIT-ASSOCIATED PROTEIN 1"/>
    <property type="match status" value="1"/>
</dbReference>
<dbReference type="PANTHER" id="PTHR43020:SF2">
    <property type="entry name" value="MITOCHONDRIAL TRNA METHYLTHIOTRANSFERASE CDK5RAP1"/>
    <property type="match status" value="1"/>
</dbReference>
<dbReference type="Pfam" id="PF04055">
    <property type="entry name" value="Radical_SAM"/>
    <property type="match status" value="1"/>
</dbReference>
<dbReference type="Pfam" id="PF01938">
    <property type="entry name" value="TRAM"/>
    <property type="match status" value="1"/>
</dbReference>
<dbReference type="Pfam" id="PF00919">
    <property type="entry name" value="UPF0004"/>
    <property type="match status" value="1"/>
</dbReference>
<dbReference type="SFLD" id="SFLDF00273">
    <property type="entry name" value="(dimethylallyl)adenosine_tRNA"/>
    <property type="match status" value="1"/>
</dbReference>
<dbReference type="SFLD" id="SFLDG01082">
    <property type="entry name" value="B12-binding_domain_containing"/>
    <property type="match status" value="1"/>
</dbReference>
<dbReference type="SFLD" id="SFLDS00029">
    <property type="entry name" value="Radical_SAM"/>
    <property type="match status" value="1"/>
</dbReference>
<dbReference type="SMART" id="SM00729">
    <property type="entry name" value="Elp3"/>
    <property type="match status" value="1"/>
</dbReference>
<dbReference type="SUPFAM" id="SSF102114">
    <property type="entry name" value="Radical SAM enzymes"/>
    <property type="match status" value="1"/>
</dbReference>
<dbReference type="PROSITE" id="PS51449">
    <property type="entry name" value="MTTASE_N"/>
    <property type="match status" value="1"/>
</dbReference>
<dbReference type="PROSITE" id="PS01278">
    <property type="entry name" value="MTTASE_RADICAL"/>
    <property type="match status" value="1"/>
</dbReference>
<dbReference type="PROSITE" id="PS51918">
    <property type="entry name" value="RADICAL_SAM"/>
    <property type="match status" value="1"/>
</dbReference>
<dbReference type="PROSITE" id="PS50926">
    <property type="entry name" value="TRAM"/>
    <property type="match status" value="1"/>
</dbReference>
<proteinExistence type="inferred from homology"/>
<protein>
    <recommendedName>
        <fullName evidence="1">tRNA-2-methylthio-N(6)-dimethylallyladenosine synthase</fullName>
        <ecNumber evidence="1">2.8.4.3</ecNumber>
    </recommendedName>
    <alternativeName>
        <fullName evidence="1">(Dimethylallyl)adenosine tRNA methylthiotransferase MiaB</fullName>
    </alternativeName>
    <alternativeName>
        <fullName evidence="1">tRNA-i(6)A37 methylthiotransferase</fullName>
    </alternativeName>
</protein>